<dbReference type="EC" id="2.7.11.1" evidence="7"/>
<dbReference type="EMBL" id="AB037133">
    <property type="protein sequence ID" value="BAA89783.1"/>
    <property type="molecule type" value="Genomic_DNA"/>
</dbReference>
<dbReference type="EMBL" id="AB019235">
    <property type="protein sequence ID" value="BAA97195.1"/>
    <property type="molecule type" value="Genomic_DNA"/>
</dbReference>
<dbReference type="EMBL" id="CP002688">
    <property type="protein sequence ID" value="AED97595.1"/>
    <property type="molecule type" value="Genomic_DNA"/>
</dbReference>
<dbReference type="RefSeq" id="NP_201037.1">
    <property type="nucleotide sequence ID" value="NM_125625.3"/>
</dbReference>
<dbReference type="SMR" id="Q9LE81"/>
<dbReference type="FunCoup" id="Q9LE81">
    <property type="interactions" value="363"/>
</dbReference>
<dbReference type="STRING" id="3702.Q9LE81"/>
<dbReference type="iPTMnet" id="Q9LE81"/>
<dbReference type="PaxDb" id="3702-AT5G62310.1"/>
<dbReference type="ProteomicsDB" id="248492"/>
<dbReference type="EnsemblPlants" id="AT5G62310.1">
    <property type="protein sequence ID" value="AT5G62310.1"/>
    <property type="gene ID" value="AT5G62310"/>
</dbReference>
<dbReference type="GeneID" id="836352"/>
<dbReference type="Gramene" id="AT5G62310.1">
    <property type="protein sequence ID" value="AT5G62310.1"/>
    <property type="gene ID" value="AT5G62310"/>
</dbReference>
<dbReference type="KEGG" id="ath:AT5G62310"/>
<dbReference type="Araport" id="AT5G62310"/>
<dbReference type="TAIR" id="AT5G62310">
    <property type="gene designation" value="IRE"/>
</dbReference>
<dbReference type="eggNOG" id="KOG0606">
    <property type="taxonomic scope" value="Eukaryota"/>
</dbReference>
<dbReference type="HOGENOM" id="CLU_000288_130_2_1"/>
<dbReference type="InParanoid" id="Q9LE81"/>
<dbReference type="OMA" id="EELWVKC"/>
<dbReference type="OrthoDB" id="162894at2759"/>
<dbReference type="PhylomeDB" id="Q9LE81"/>
<dbReference type="PRO" id="PR:Q9LE81"/>
<dbReference type="Proteomes" id="UP000006548">
    <property type="component" value="Chromosome 5"/>
</dbReference>
<dbReference type="ExpressionAtlas" id="Q9LE81">
    <property type="expression patterns" value="baseline and differential"/>
</dbReference>
<dbReference type="GO" id="GO:0005524">
    <property type="term" value="F:ATP binding"/>
    <property type="evidence" value="ECO:0007669"/>
    <property type="project" value="UniProtKB-KW"/>
</dbReference>
<dbReference type="GO" id="GO:0016301">
    <property type="term" value="F:kinase activity"/>
    <property type="evidence" value="ECO:0000250"/>
    <property type="project" value="TAIR"/>
</dbReference>
<dbReference type="GO" id="GO:0106310">
    <property type="term" value="F:protein serine kinase activity"/>
    <property type="evidence" value="ECO:0007669"/>
    <property type="project" value="RHEA"/>
</dbReference>
<dbReference type="GO" id="GO:0004674">
    <property type="term" value="F:protein serine/threonine kinase activity"/>
    <property type="evidence" value="ECO:0000304"/>
    <property type="project" value="TAIR"/>
</dbReference>
<dbReference type="GO" id="GO:0008270">
    <property type="term" value="F:zinc ion binding"/>
    <property type="evidence" value="ECO:0007669"/>
    <property type="project" value="UniProtKB-KW"/>
</dbReference>
<dbReference type="GO" id="GO:0009826">
    <property type="term" value="P:unidimensional cell growth"/>
    <property type="evidence" value="ECO:0000315"/>
    <property type="project" value="TAIR"/>
</dbReference>
<dbReference type="CDD" id="cd05579">
    <property type="entry name" value="STKc_MAST_like"/>
    <property type="match status" value="1"/>
</dbReference>
<dbReference type="FunFam" id="3.30.200.20:FF:000147">
    <property type="entry name" value="probable serine/threonine protein kinase IREH1"/>
    <property type="match status" value="1"/>
</dbReference>
<dbReference type="Gene3D" id="3.30.200.20">
    <property type="entry name" value="Phosphorylase Kinase, domain 1"/>
    <property type="match status" value="1"/>
</dbReference>
<dbReference type="Gene3D" id="1.10.510.10">
    <property type="entry name" value="Transferase(Phosphotransferase) domain 1"/>
    <property type="match status" value="1"/>
</dbReference>
<dbReference type="InterPro" id="IPR000961">
    <property type="entry name" value="AGC-kinase_C"/>
</dbReference>
<dbReference type="InterPro" id="IPR011009">
    <property type="entry name" value="Kinase-like_dom_sf"/>
</dbReference>
<dbReference type="InterPro" id="IPR000719">
    <property type="entry name" value="Prot_kinase_dom"/>
</dbReference>
<dbReference type="InterPro" id="IPR008271">
    <property type="entry name" value="Ser/Thr_kinase_AS"/>
</dbReference>
<dbReference type="InterPro" id="IPR050236">
    <property type="entry name" value="Ser_Thr_kinase_AGC"/>
</dbReference>
<dbReference type="PANTHER" id="PTHR24356">
    <property type="entry name" value="SERINE/THREONINE-PROTEIN KINASE"/>
    <property type="match status" value="1"/>
</dbReference>
<dbReference type="PANTHER" id="PTHR24356:SF395">
    <property type="entry name" value="SERINE_THREONINE PROTEIN KINASE IRE-RELATED"/>
    <property type="match status" value="1"/>
</dbReference>
<dbReference type="Pfam" id="PF00069">
    <property type="entry name" value="Pkinase"/>
    <property type="match status" value="1"/>
</dbReference>
<dbReference type="SMART" id="SM00220">
    <property type="entry name" value="S_TKc"/>
    <property type="match status" value="1"/>
</dbReference>
<dbReference type="SUPFAM" id="SSF56112">
    <property type="entry name" value="Protein kinase-like (PK-like)"/>
    <property type="match status" value="1"/>
</dbReference>
<dbReference type="PROSITE" id="PS51285">
    <property type="entry name" value="AGC_KINASE_CTER"/>
    <property type="match status" value="1"/>
</dbReference>
<dbReference type="PROSITE" id="PS50011">
    <property type="entry name" value="PROTEIN_KINASE_DOM"/>
    <property type="match status" value="1"/>
</dbReference>
<dbReference type="PROSITE" id="PS00108">
    <property type="entry name" value="PROTEIN_KINASE_ST"/>
    <property type="match status" value="1"/>
</dbReference>
<comment type="function">
    <text evidence="4">Modulates root tip growth. May play a common role in the tip growth of plant cells.</text>
</comment>
<comment type="catalytic activity">
    <reaction evidence="7">
        <text>L-seryl-[protein] + ATP = O-phospho-L-seryl-[protein] + ADP + H(+)</text>
        <dbReference type="Rhea" id="RHEA:17989"/>
        <dbReference type="Rhea" id="RHEA-COMP:9863"/>
        <dbReference type="Rhea" id="RHEA-COMP:11604"/>
        <dbReference type="ChEBI" id="CHEBI:15378"/>
        <dbReference type="ChEBI" id="CHEBI:29999"/>
        <dbReference type="ChEBI" id="CHEBI:30616"/>
        <dbReference type="ChEBI" id="CHEBI:83421"/>
        <dbReference type="ChEBI" id="CHEBI:456216"/>
        <dbReference type="EC" id="2.7.11.1"/>
    </reaction>
</comment>
<comment type="catalytic activity">
    <reaction evidence="7">
        <text>L-threonyl-[protein] + ATP = O-phospho-L-threonyl-[protein] + ADP + H(+)</text>
        <dbReference type="Rhea" id="RHEA:46608"/>
        <dbReference type="Rhea" id="RHEA-COMP:11060"/>
        <dbReference type="Rhea" id="RHEA-COMP:11605"/>
        <dbReference type="ChEBI" id="CHEBI:15378"/>
        <dbReference type="ChEBI" id="CHEBI:30013"/>
        <dbReference type="ChEBI" id="CHEBI:30616"/>
        <dbReference type="ChEBI" id="CHEBI:61977"/>
        <dbReference type="ChEBI" id="CHEBI:456216"/>
        <dbReference type="EC" id="2.7.11.1"/>
    </reaction>
</comment>
<comment type="tissue specificity">
    <text evidence="4">Highly expressed in roots, elongating root hair cells and pollen grains.</text>
</comment>
<comment type="disruption phenotype">
    <text evidence="4">Reduced root hair length.</text>
</comment>
<comment type="similarity">
    <text evidence="7">Belongs to the protein kinase superfamily. AGC Ser/Thr protein kinase family.</text>
</comment>
<protein>
    <recommendedName>
        <fullName evidence="7">Probable serine/threonine protein kinase IRE</fullName>
        <ecNumber evidence="7">2.7.11.1</ecNumber>
    </recommendedName>
    <alternativeName>
        <fullName evidence="5">Protein INCOMPLETE ROOT HAIR ELONGATION</fullName>
        <shortName evidence="6">AtIRE</shortName>
    </alternativeName>
</protein>
<evidence type="ECO:0000255" key="1">
    <source>
        <dbReference type="PROSITE-ProRule" id="PRU00159"/>
    </source>
</evidence>
<evidence type="ECO:0000255" key="2">
    <source>
        <dbReference type="PROSITE-ProRule" id="PRU00618"/>
    </source>
</evidence>
<evidence type="ECO:0000256" key="3">
    <source>
        <dbReference type="SAM" id="MobiDB-lite"/>
    </source>
</evidence>
<evidence type="ECO:0000269" key="4">
    <source>
    </source>
</evidence>
<evidence type="ECO:0000303" key="5">
    <source>
    </source>
</evidence>
<evidence type="ECO:0000303" key="6">
    <source>
    </source>
</evidence>
<evidence type="ECO:0000305" key="7"/>
<evidence type="ECO:0000312" key="8">
    <source>
        <dbReference type="Araport" id="AT5G62310"/>
    </source>
</evidence>
<keyword id="KW-0067">ATP-binding</keyword>
<keyword id="KW-0341">Growth regulation</keyword>
<keyword id="KW-0418">Kinase</keyword>
<keyword id="KW-0479">Metal-binding</keyword>
<keyword id="KW-0547">Nucleotide-binding</keyword>
<keyword id="KW-0597">Phosphoprotein</keyword>
<keyword id="KW-1185">Reference proteome</keyword>
<keyword id="KW-0723">Serine/threonine-protein kinase</keyword>
<keyword id="KW-0808">Transferase</keyword>
<keyword id="KW-0862">Zinc</keyword>
<keyword id="KW-0863">Zinc-finger</keyword>
<gene>
    <name evidence="5" type="primary">IRE</name>
    <name evidence="8" type="ordered locus">At5g62310</name>
</gene>
<organism>
    <name type="scientific">Arabidopsis thaliana</name>
    <name type="common">Mouse-ear cress</name>
    <dbReference type="NCBI Taxonomy" id="3702"/>
    <lineage>
        <taxon>Eukaryota</taxon>
        <taxon>Viridiplantae</taxon>
        <taxon>Streptophyta</taxon>
        <taxon>Embryophyta</taxon>
        <taxon>Tracheophyta</taxon>
        <taxon>Spermatophyta</taxon>
        <taxon>Magnoliopsida</taxon>
        <taxon>eudicotyledons</taxon>
        <taxon>Gunneridae</taxon>
        <taxon>Pentapetalae</taxon>
        <taxon>rosids</taxon>
        <taxon>malvids</taxon>
        <taxon>Brassicales</taxon>
        <taxon>Brassicaceae</taxon>
        <taxon>Camelineae</taxon>
        <taxon>Arabidopsis</taxon>
    </lineage>
</organism>
<feature type="chain" id="PRO_0000431353" description="Probable serine/threonine protein kinase IRE">
    <location>
        <begin position="1"/>
        <end position="1168"/>
    </location>
</feature>
<feature type="domain" description="Protein kinase" evidence="1">
    <location>
        <begin position="754"/>
        <end position="1043"/>
    </location>
</feature>
<feature type="domain" description="AGC-kinase C-terminal" evidence="2">
    <location>
        <begin position="1044"/>
        <end position="1144"/>
    </location>
</feature>
<feature type="zinc finger region" description="C2H2-type; atypical" evidence="5">
    <location>
        <begin position="488"/>
        <end position="507"/>
    </location>
</feature>
<feature type="region of interest" description="Disordered" evidence="3">
    <location>
        <begin position="1"/>
        <end position="165"/>
    </location>
</feature>
<feature type="region of interest" description="Disordered" evidence="3">
    <location>
        <begin position="377"/>
        <end position="444"/>
    </location>
</feature>
<feature type="region of interest" description="Disordered" evidence="3">
    <location>
        <begin position="546"/>
        <end position="566"/>
    </location>
</feature>
<feature type="region of interest" description="Disordered" evidence="3">
    <location>
        <begin position="602"/>
        <end position="622"/>
    </location>
</feature>
<feature type="region of interest" description="Disordered" evidence="3">
    <location>
        <begin position="717"/>
        <end position="744"/>
    </location>
</feature>
<feature type="compositionally biased region" description="Low complexity" evidence="3">
    <location>
        <begin position="16"/>
        <end position="25"/>
    </location>
</feature>
<feature type="compositionally biased region" description="Basic and acidic residues" evidence="3">
    <location>
        <begin position="39"/>
        <end position="54"/>
    </location>
</feature>
<feature type="compositionally biased region" description="Basic and acidic residues" evidence="3">
    <location>
        <begin position="107"/>
        <end position="130"/>
    </location>
</feature>
<feature type="compositionally biased region" description="Polar residues" evidence="3">
    <location>
        <begin position="146"/>
        <end position="163"/>
    </location>
</feature>
<feature type="compositionally biased region" description="Polar residues" evidence="3">
    <location>
        <begin position="401"/>
        <end position="414"/>
    </location>
</feature>
<feature type="active site" description="Proton acceptor" evidence="1">
    <location>
        <position position="877"/>
    </location>
</feature>
<feature type="binding site" evidence="1">
    <location>
        <begin position="760"/>
        <end position="768"/>
    </location>
    <ligand>
        <name>ATP</name>
        <dbReference type="ChEBI" id="CHEBI:30616"/>
    </ligand>
</feature>
<feature type="binding site" evidence="1">
    <location>
        <position position="783"/>
    </location>
    <ligand>
        <name>ATP</name>
        <dbReference type="ChEBI" id="CHEBI:30616"/>
    </ligand>
</feature>
<sequence>MSTTEPSPENDRDPQPTTISTPTSTNAKLLKKIPAIPFRHSDKEGEDEQAKTDEVTTELAGEGPMSHDSPEILAPSSLGLNHIRTKSSPAPSPLRFSSATPLISPGQDDKDVAKEKPRVGVVDARADARARWPIPPHQPDQGKKVQWSQSKSQRVPANSNPGVESTHVGLAKETQSPRFQAILRVTSGRKKKAHDIKSFSHELNSKGVRPFPVWRSRAVGHMEEIMAAIRTKFDKQKEDVDADLGVFAGYLVTTLESTPESNKELRVGLEDLLVEARQCATMPASEFWLKCEGIVQKLDDKRQELPMGGLKQAHNRLLFILTRCNRLVQFRKESGYVEEHILGMHQLSDLGVYPEQMVEISRQQDLLREKEIQKINEKQNLAGKQDDQNSNSGADGVEVNTARSTDSTSSNFRMSSWKKLPSAAEKNRSLNNTPKAKGESKIQPKVYGDENAENLHSPSGQPASADRSALWGFWADHQCVTYDNSMICRICEVEIPVVHVEEHSRICTIADRCDLKGINVNLRLERVAESLEKILESWTPKSSVTPRAVADSARLSNSSRQEDLDEISQRCSDDMLDCVPRSQNTFSLDELNILNEMSMTNGTKDSSAGSLTPPSPATPRNSQVDLLLSGRKTISELENYQQINKLLDIARSVANVNVCGYSSLDFMIEQLDELKYVIQDRKADALVVETFGRRIEKLLQEKYIELCGLIDDEKVDSSNAMPDEESSADEDTVRSLRASPLNPRAKDRTSIEDFEIIKPISRGAFGRVFLAKKRATGDLFAIKVLKKADMIRKNAVESILAERNILISVRNPFVVRFFYSFTCRENLYLVMEYLNGGDLFSLLRNLGCLDEDMARIYIAEVVLALEYLHSVNIIHRDLKPDNLLINQDGHIKLTDFGLSKVGLINSTDDLSGESSLGNSGFFAEDGSKAQHSQGKDSRKKHAVVGTPDYLAPEILLGMGHGKTADWWSVGVILFEVLVGIPPFNAETPQQIFENIINRDIPWPNVPEEISYEAHDLINKLLTENPVQRLGATGAGEVKQHHFFKDINWDTLARQKAMFVPSAEPQDTSYFMSRYIWNPEDENVHGGSDFDDLTDTCSSSSFNTQEEDGDECGSLAEFGNGPNLAVKYSFSNFSFKNLSQLASINYDLVLKNAKESVEASNQSAPRPET</sequence>
<name>IRE_ARATH</name>
<reference key="1">
    <citation type="journal article" date="2002" name="Plant J.">
        <title>The IRE gene encodes a protein kinase homologue and modulates root hair growth in Arabidopsis.</title>
        <authorList>
            <person name="Oyama T."/>
            <person name="Shimura Y."/>
            <person name="Okada K."/>
        </authorList>
    </citation>
    <scope>NUCLEOTIDE SEQUENCE [GENOMIC DNA]</scope>
    <scope>FUNCTION</scope>
    <scope>TISSUE SPECIFICITY</scope>
    <scope>DISRUPTION PHENOTYPE</scope>
    <source>
        <strain>cv. Wassilewskija</strain>
    </source>
</reference>
<reference key="2">
    <citation type="journal article" date="2000" name="DNA Res.">
        <title>Structural analysis of Arabidopsis thaliana chromosome 5. X. Sequence features of the regions of 3,076,755 bp covered by sixty P1 and TAC clones.</title>
        <authorList>
            <person name="Sato S."/>
            <person name="Nakamura Y."/>
            <person name="Kaneko T."/>
            <person name="Katoh T."/>
            <person name="Asamizu E."/>
            <person name="Kotani H."/>
            <person name="Tabata S."/>
        </authorList>
    </citation>
    <scope>NUCLEOTIDE SEQUENCE [LARGE SCALE GENOMIC DNA]</scope>
    <source>
        <strain>cv. Columbia</strain>
    </source>
</reference>
<reference key="3">
    <citation type="journal article" date="2017" name="Plant J.">
        <title>Araport11: a complete reannotation of the Arabidopsis thaliana reference genome.</title>
        <authorList>
            <person name="Cheng C.Y."/>
            <person name="Krishnakumar V."/>
            <person name="Chan A.P."/>
            <person name="Thibaud-Nissen F."/>
            <person name="Schobel S."/>
            <person name="Town C.D."/>
        </authorList>
    </citation>
    <scope>GENOME REANNOTATION</scope>
    <source>
        <strain>cv. Columbia</strain>
    </source>
</reference>
<reference key="4">
    <citation type="journal article" date="2007" name="Plant Physiol.">
        <title>An IRE-like AGC kinase gene, MtIRE, has unique expression in the invasion zone of developing root nodules in Medicago truncatula.</title>
        <authorList>
            <person name="Pislariu C.I."/>
            <person name="Dickstein R."/>
        </authorList>
    </citation>
    <scope>GENE FAMILY</scope>
</reference>
<proteinExistence type="evidence at transcript level"/>
<accession>Q9LE81</accession>